<keyword id="KW-1185">Reference proteome</keyword>
<keyword id="KW-0687">Ribonucleoprotein</keyword>
<keyword id="KW-0689">Ribosomal protein</keyword>
<keyword id="KW-0694">RNA-binding</keyword>
<keyword id="KW-0699">rRNA-binding</keyword>
<sequence length="129" mass="14874">MRKYETIYILQPDLSEDDIKVVADKVQDVITSYKGDFQRLEDWGIRKLAYPINKCARGRYLYLRYDGGREMIAELERRLRLDEKVLRFQSVNITNQPEKPVVEKKPVPVEAEAVESAEAVAAPAETVSE</sequence>
<evidence type="ECO:0000255" key="1">
    <source>
        <dbReference type="HAMAP-Rule" id="MF_00360"/>
    </source>
</evidence>
<evidence type="ECO:0000305" key="2"/>
<gene>
    <name evidence="1" type="primary">rpsF</name>
    <name type="ordered locus">Ppro_0758</name>
</gene>
<reference key="1">
    <citation type="submission" date="2006-10" db="EMBL/GenBank/DDBJ databases">
        <title>Complete sequence of chromosome of Pelobacter propionicus DSM 2379.</title>
        <authorList>
            <consortium name="US DOE Joint Genome Institute"/>
            <person name="Copeland A."/>
            <person name="Lucas S."/>
            <person name="Lapidus A."/>
            <person name="Barry K."/>
            <person name="Detter J.C."/>
            <person name="Glavina del Rio T."/>
            <person name="Hammon N."/>
            <person name="Israni S."/>
            <person name="Dalin E."/>
            <person name="Tice H."/>
            <person name="Pitluck S."/>
            <person name="Saunders E."/>
            <person name="Brettin T."/>
            <person name="Bruce D."/>
            <person name="Han C."/>
            <person name="Tapia R."/>
            <person name="Schmutz J."/>
            <person name="Larimer F."/>
            <person name="Land M."/>
            <person name="Hauser L."/>
            <person name="Kyrpides N."/>
            <person name="Kim E."/>
            <person name="Lovley D."/>
            <person name="Richardson P."/>
        </authorList>
    </citation>
    <scope>NUCLEOTIDE SEQUENCE [LARGE SCALE GENOMIC DNA]</scope>
    <source>
        <strain>DSM 2379 / NBRC 103807 / OttBd1</strain>
    </source>
</reference>
<comment type="function">
    <text evidence="1">Binds together with bS18 to 16S ribosomal RNA.</text>
</comment>
<comment type="similarity">
    <text evidence="1">Belongs to the bacterial ribosomal protein bS6 family.</text>
</comment>
<accession>A1AM18</accession>
<protein>
    <recommendedName>
        <fullName evidence="1">Small ribosomal subunit protein bS6</fullName>
    </recommendedName>
    <alternativeName>
        <fullName evidence="2">30S ribosomal protein S6</fullName>
    </alternativeName>
</protein>
<dbReference type="EMBL" id="CP000482">
    <property type="protein sequence ID" value="ABK98388.1"/>
    <property type="molecule type" value="Genomic_DNA"/>
</dbReference>
<dbReference type="RefSeq" id="WP_011734700.1">
    <property type="nucleotide sequence ID" value="NC_008609.1"/>
</dbReference>
<dbReference type="SMR" id="A1AM18"/>
<dbReference type="STRING" id="338966.Ppro_0758"/>
<dbReference type="KEGG" id="ppd:Ppro_0758"/>
<dbReference type="eggNOG" id="COG0360">
    <property type="taxonomic scope" value="Bacteria"/>
</dbReference>
<dbReference type="HOGENOM" id="CLU_113441_4_0_7"/>
<dbReference type="OrthoDB" id="9812702at2"/>
<dbReference type="Proteomes" id="UP000006732">
    <property type="component" value="Chromosome"/>
</dbReference>
<dbReference type="GO" id="GO:0022627">
    <property type="term" value="C:cytosolic small ribosomal subunit"/>
    <property type="evidence" value="ECO:0007669"/>
    <property type="project" value="TreeGrafter"/>
</dbReference>
<dbReference type="GO" id="GO:0070181">
    <property type="term" value="F:small ribosomal subunit rRNA binding"/>
    <property type="evidence" value="ECO:0007669"/>
    <property type="project" value="TreeGrafter"/>
</dbReference>
<dbReference type="GO" id="GO:0003735">
    <property type="term" value="F:structural constituent of ribosome"/>
    <property type="evidence" value="ECO:0007669"/>
    <property type="project" value="InterPro"/>
</dbReference>
<dbReference type="GO" id="GO:0006412">
    <property type="term" value="P:translation"/>
    <property type="evidence" value="ECO:0007669"/>
    <property type="project" value="UniProtKB-UniRule"/>
</dbReference>
<dbReference type="CDD" id="cd00473">
    <property type="entry name" value="bS6"/>
    <property type="match status" value="1"/>
</dbReference>
<dbReference type="Gene3D" id="3.30.70.60">
    <property type="match status" value="1"/>
</dbReference>
<dbReference type="HAMAP" id="MF_00360">
    <property type="entry name" value="Ribosomal_bS6"/>
    <property type="match status" value="1"/>
</dbReference>
<dbReference type="InterPro" id="IPR000529">
    <property type="entry name" value="Ribosomal_bS6"/>
</dbReference>
<dbReference type="InterPro" id="IPR035980">
    <property type="entry name" value="Ribosomal_bS6_sf"/>
</dbReference>
<dbReference type="InterPro" id="IPR020814">
    <property type="entry name" value="Ribosomal_S6_plastid/chlpt"/>
</dbReference>
<dbReference type="InterPro" id="IPR014717">
    <property type="entry name" value="Transl_elong_EF1B/ribsomal_bS6"/>
</dbReference>
<dbReference type="NCBIfam" id="TIGR00166">
    <property type="entry name" value="S6"/>
    <property type="match status" value="1"/>
</dbReference>
<dbReference type="PANTHER" id="PTHR21011">
    <property type="entry name" value="MITOCHONDRIAL 28S RIBOSOMAL PROTEIN S6"/>
    <property type="match status" value="1"/>
</dbReference>
<dbReference type="PANTHER" id="PTHR21011:SF1">
    <property type="entry name" value="SMALL RIBOSOMAL SUBUNIT PROTEIN BS6M"/>
    <property type="match status" value="1"/>
</dbReference>
<dbReference type="Pfam" id="PF01250">
    <property type="entry name" value="Ribosomal_S6"/>
    <property type="match status" value="1"/>
</dbReference>
<dbReference type="SUPFAM" id="SSF54995">
    <property type="entry name" value="Ribosomal protein S6"/>
    <property type="match status" value="1"/>
</dbReference>
<feature type="chain" id="PRO_1000005310" description="Small ribosomal subunit protein bS6">
    <location>
        <begin position="1"/>
        <end position="129"/>
    </location>
</feature>
<organism>
    <name type="scientific">Pelobacter propionicus (strain DSM 2379 / NBRC 103807 / OttBd1)</name>
    <dbReference type="NCBI Taxonomy" id="338966"/>
    <lineage>
        <taxon>Bacteria</taxon>
        <taxon>Pseudomonadati</taxon>
        <taxon>Thermodesulfobacteriota</taxon>
        <taxon>Desulfuromonadia</taxon>
        <taxon>Desulfuromonadales</taxon>
        <taxon>Desulfuromonadaceae</taxon>
        <taxon>Pelobacter</taxon>
    </lineage>
</organism>
<name>RS6_PELPD</name>
<proteinExistence type="inferred from homology"/>